<comment type="function">
    <text evidence="2 3 4 7">Plays an essential role in viral RNA synthesis and also a role in suppressing innate immune signaling. Acts as a polymerase cofactor in the RNA polymerase transcription and replication complexes (By similarity). Serves as nucleoprotein/NP monomer chaperone prior to the formation of the large oligomeric RNA-bound complexes (PubMed:31337716). Regulates RNA synthesis by modulating NP-RNA interactions and interacting with DYNLL1. VP35-NP interaction controls the switch between RNA-bound NP and free NP and thus the switch between genome replication and genome packaging into the nucleocapsid. Prevents establishment of cellular antiviral state, thereby suppressing host DC maturation. Acts by inhibiting host RIGI activation both by shielding dsRNA from detection and by preventing PRKRA binding to RIGI. Blocks virus-induced phosphorylation and activation of interferon regulatory factor 3/IRF3, a transcription factor critical for the induction of interferons alpha and beta. This blockage is produced through the interaction with and inhibition of host IKBKE and TBK1, producing a strong inhibition of the phosphorylation and activation of IRF3. Also inhibits the antiviral effect mediated by the host interferon-induced, double-stranded RNA-activated protein kinase EIF2AK2/PKR. Increases PIAS1-mediated SUMOylation of IRF7, thereby repressing interferon transcription (By similarity). Also acts as a suppressor of RNA silencing by interacting with host DICER1, TARBP2/TRBP and PRKRA/PACT (By similarity). As a dimer, binds and sequesters dsRNA contributing to the inhibition of interferon production (By similarity).</text>
</comment>
<comment type="subunit">
    <text evidence="2 3 4 8">Homodimer (By similarity). Homooligomer; via the coiled coil domain. Interacts with nucleoprotein NP and polymerase L; VP35 bridges L and NP and allows the formation of the polymerase complex (Probable). Also interacts with VP30; this interaction is regulated by VP30 phosphorylation. Interacts with host IKBKE and TBK1; the interactions lead to inhibition of cellular antiviral response by blocking necessary interactions of IKBKE and TBK1 with their substrate IRF3. Interacts with host DYNLL1; this interaction stabilizes VP35 N-terminal oligomerization domain, enhances viral RNA synthesis but does not participate in suppressing the host innate immune response. Interacts with host PRKRA; this interaction inhibits the interaction between RIGI and PRKRA. Interacts with dsRNA. Interacts with host TRIM6; this interaction plays an important role in promoting efficient viral replication. Interacts with host STAU1. Interacts with host IRF7, PIAS1 and UBE2I/UBC9; these interactions mediate the sumoylation of IRF7 and contribute to the inhibition of IFN-type I production (By similarity). Interacts with host DICER1; this interaction prevents TARBP2/TRBP binding to DICER1 and thus allows the virus to counteract host RNA silencing. Interacts with host TARBP2/TRBP and PRKRA/PACT; these interactions prevent TARBP2 and PRKRA binding to DICER1 and thus allows the virus to counteract host RNA silencing (By similarity).</text>
</comment>
<comment type="subcellular location">
    <subcellularLocation>
        <location>Virion</location>
    </subcellularLocation>
    <subcellularLocation>
        <location evidence="1">Host cytoplasm</location>
    </subcellularLocation>
</comment>
<comment type="PTM">
    <text evidence="2">Phosphorylated by host IKBKE. Phosphorylation contributes to efficient viral replication and transcription.</text>
</comment>
<comment type="PTM">
    <text evidence="2">Ubiquitinated by host TRIM6 to facilitate virus replication.</text>
</comment>
<comment type="similarity">
    <text evidence="6">Belongs to the filoviridae polymerase cofactor VP35 family.</text>
</comment>
<keyword id="KW-0002">3D-structure</keyword>
<keyword id="KW-0175">Coiled coil</keyword>
<keyword id="KW-1035">Host cytoplasm</keyword>
<keyword id="KW-0945">Host-virus interaction</keyword>
<keyword id="KW-1224">Inhibition of host IKBKE by virus</keyword>
<keyword id="KW-1090">Inhibition of host innate immune response by virus</keyword>
<keyword id="KW-1093">Inhibition of host IRF7 by virus</keyword>
<keyword id="KW-1113">Inhibition of host RLR pathway by virus</keyword>
<keyword id="KW-1223">Inhibition of host TBK1 by virus</keyword>
<keyword id="KW-1225">Inhibition of host TLR pathway by virus</keyword>
<keyword id="KW-0922">Interferon antiviral system evasion</keyword>
<keyword id="KW-1017">Isopeptide bond</keyword>
<keyword id="KW-0597">Phosphoprotein</keyword>
<keyword id="KW-0694">RNA-binding</keyword>
<keyword id="KW-0941">Suppressor of RNA silencing</keyword>
<keyword id="KW-0804">Transcription</keyword>
<keyword id="KW-0832">Ubl conjugation</keyword>
<keyword id="KW-0899">Viral immunoevasion</keyword>
<keyword id="KW-0693">Viral RNA replication</keyword>
<keyword id="KW-0946">Virion</keyword>
<organism>
    <name type="scientific">Sudan ebolavirus (strain Human/Uganda/Gulu/2000)</name>
    <name type="common">SEBOV</name>
    <name type="synonym">Sudan Ebola virus</name>
    <dbReference type="NCBI Taxonomy" id="386033"/>
    <lineage>
        <taxon>Viruses</taxon>
        <taxon>Riboviria</taxon>
        <taxon>Orthornavirae</taxon>
        <taxon>Negarnaviricota</taxon>
        <taxon>Haploviricotina</taxon>
        <taxon>Monjiviricetes</taxon>
        <taxon>Mononegavirales</taxon>
        <taxon>Filoviridae</taxon>
        <taxon>Orthoebolavirus</taxon>
        <taxon>Orthoebolavirus sudanense</taxon>
        <taxon>Sudan ebolavirus</taxon>
    </lineage>
</organism>
<evidence type="ECO:0000250" key="1"/>
<evidence type="ECO:0000250" key="2">
    <source>
        <dbReference type="UniProtKB" id="Q05127"/>
    </source>
</evidence>
<evidence type="ECO:0000250" key="3">
    <source>
        <dbReference type="UniProtKB" id="Q6V1Q9"/>
    </source>
</evidence>
<evidence type="ECO:0000250" key="4">
    <source>
        <dbReference type="UniProtKB" id="Q8JPY0"/>
    </source>
</evidence>
<evidence type="ECO:0000255" key="5"/>
<evidence type="ECO:0000255" key="6">
    <source>
        <dbReference type="PROSITE-ProRule" id="PRU01071"/>
    </source>
</evidence>
<evidence type="ECO:0000269" key="7">
    <source>
    </source>
</evidence>
<evidence type="ECO:0000305" key="8">
    <source>
    </source>
</evidence>
<evidence type="ECO:0007744" key="9">
    <source>
        <dbReference type="PDB" id="6OAF"/>
    </source>
</evidence>
<evidence type="ECO:0007829" key="10">
    <source>
        <dbReference type="PDB" id="6OAF"/>
    </source>
</evidence>
<feature type="chain" id="PRO_0000245077" description="Polymerase cofactor VP35">
    <location>
        <begin position="1"/>
        <end position="329"/>
    </location>
</feature>
<feature type="domain" description="VP35 IID" evidence="6">
    <location>
        <begin position="204"/>
        <end position="329"/>
    </location>
</feature>
<feature type="region of interest" description="Chaperones the nucleoprotein" evidence="7">
    <location>
        <begin position="1"/>
        <end position="49"/>
    </location>
</feature>
<feature type="coiled-coil region" evidence="5">
    <location>
        <begin position="84"/>
        <end position="108"/>
    </location>
</feature>
<feature type="modified residue" description="Phosphoserine" evidence="2">
    <location>
        <position position="194"/>
    </location>
</feature>
<feature type="modified residue" description="Phosphothreonine" evidence="2">
    <location>
        <position position="195"/>
    </location>
</feature>
<feature type="modified residue" description="Phosphoserine" evidence="2">
    <location>
        <position position="306"/>
    </location>
</feature>
<feature type="cross-link" description="Glycyl lysine isopeptide (Lys-Gly) (interchain with G-Cter in ubiquitin)" evidence="2">
    <location>
        <position position="298"/>
    </location>
</feature>
<feature type="strand" evidence="10">
    <location>
        <begin position="9"/>
        <end position="12"/>
    </location>
</feature>
<feature type="helix" evidence="10">
    <location>
        <begin position="17"/>
        <end position="23"/>
    </location>
</feature>
<feature type="helix" evidence="10">
    <location>
        <begin position="29"/>
        <end position="31"/>
    </location>
</feature>
<feature type="turn" evidence="10">
    <location>
        <begin position="47"/>
        <end position="49"/>
    </location>
</feature>
<reference key="1">
    <citation type="journal article" date="2005" name="Virus Res.">
        <title>Complete genome sequence of an Ebola virus (Sudan species) responsible for a 2000 outbreak of human disease in Uganda.</title>
        <authorList>
            <person name="Sanchez A."/>
            <person name="Rollin P.E."/>
        </authorList>
    </citation>
    <scope>NUCLEOTIDE SEQUENCE [GENOMIC RNA]</scope>
</reference>
<reference evidence="9" key="2">
    <citation type="journal article" date="2019" name="MBio">
        <title>Sudan Ebolavirus VP35-NP Crystal Structure Reveals a Potential Target for Pan-Filovirus Treatment.</title>
        <authorList>
            <person name="Landeras-Bueno S."/>
            <person name="Oda S.I."/>
            <person name="Norris M.J."/>
            <person name="Li Salie Z."/>
            <person name="Guenaga J."/>
            <person name="Wyatt R.T."/>
            <person name="Saphire E.O."/>
        </authorList>
    </citation>
    <scope>X-RAY CRYSTALLOGRAPHY (2.20 ANGSTROMS) OF 1-49</scope>
    <scope>FUNCTION</scope>
    <scope>INTERACTION WITH THE NUCLEOPROTEIN</scope>
</reference>
<gene>
    <name type="primary">VP35</name>
</gene>
<proteinExistence type="evidence at protein level"/>
<sequence>MQQDRTYRHHGPEVSGWFSEQLMTGKIPLTEVFVDVENKPSPAPITIISKNPKTTRKSDKQVQTDDASSLLTEEVKAAINSVISAVRRQTNAIESLEGRVTTLEASLKPVQDMAKTISSLNRSCAEMVAKYDLLVMTTGRATATAAATEAYWNEHGQAPPGPSLYEDDAIKAKLKDPNGKVPESVKQAYINLDSTSALNEENFGRPYISAKDLKEIIYDHLPGFGTAFHQLVQVICKIGKDNNILDIIHAEFQASLAEGDSPQCALIQITKRIPAFQDASPPIVHIKSRGDIPKACQKSLRPVPPSPKIDRGWVCIFQFQDGKALGLKI</sequence>
<protein>
    <recommendedName>
        <fullName>Polymerase cofactor VP35</fullName>
    </recommendedName>
</protein>
<organismHost>
    <name type="scientific">Epomops franqueti</name>
    <name type="common">Franquet's epauletted fruit bat</name>
    <name type="synonym">Epomophorus franqueti</name>
    <dbReference type="NCBI Taxonomy" id="77231"/>
</organismHost>
<organismHost>
    <name type="scientific">Homo sapiens</name>
    <name type="common">Human</name>
    <dbReference type="NCBI Taxonomy" id="9606"/>
</organismHost>
<organismHost>
    <name type="scientific">Myonycteris torquata</name>
    <name type="common">Little collared fruit bat</name>
    <dbReference type="NCBI Taxonomy" id="77243"/>
</organismHost>
<dbReference type="EMBL" id="AY729654">
    <property type="protein sequence ID" value="AAU43884.1"/>
    <property type="molecule type" value="Genomic_RNA"/>
</dbReference>
<dbReference type="RefSeq" id="YP_138521.1">
    <property type="nucleotide sequence ID" value="NC_006432.1"/>
</dbReference>
<dbReference type="PDB" id="6OAF">
    <property type="method" value="X-ray"/>
    <property type="resolution" value="2.20 A"/>
    <property type="chains" value="A=1-49"/>
</dbReference>
<dbReference type="PDBsum" id="6OAF"/>
<dbReference type="SMR" id="Q5XX07"/>
<dbReference type="GeneID" id="3160776"/>
<dbReference type="KEGG" id="vg:3160776"/>
<dbReference type="Proteomes" id="UP000000277">
    <property type="component" value="Segment"/>
</dbReference>
<dbReference type="GO" id="GO:0030430">
    <property type="term" value="C:host cell cytoplasm"/>
    <property type="evidence" value="ECO:0007669"/>
    <property type="project" value="UniProtKB-SubCell"/>
</dbReference>
<dbReference type="GO" id="GO:0044423">
    <property type="term" value="C:virion component"/>
    <property type="evidence" value="ECO:0007669"/>
    <property type="project" value="UniProtKB-KW"/>
</dbReference>
<dbReference type="GO" id="GO:0003723">
    <property type="term" value="F:RNA binding"/>
    <property type="evidence" value="ECO:0007669"/>
    <property type="project" value="UniProtKB-KW"/>
</dbReference>
<dbReference type="GO" id="GO:0039724">
    <property type="term" value="P:symbiont-mediated suppression of host cytoplasmic pattern recognition receptor signaling pathway via inhibition of IKBKE activity"/>
    <property type="evidence" value="ECO:0007669"/>
    <property type="project" value="UniProtKB-KW"/>
</dbReference>
<dbReference type="GO" id="GO:0039557">
    <property type="term" value="P:symbiont-mediated suppression of host cytoplasmic pattern recognition receptor signaling pathway via inhibition of IRF7 activity"/>
    <property type="evidence" value="ECO:0007669"/>
    <property type="project" value="UniProtKB-KW"/>
</dbReference>
<dbReference type="GO" id="GO:0039723">
    <property type="term" value="P:symbiont-mediated suppression of host cytoplasmic pattern recognition receptor signaling pathway via inhibition of TBK1 activity"/>
    <property type="evidence" value="ECO:0007669"/>
    <property type="project" value="UniProtKB-KW"/>
</dbReference>
<dbReference type="GO" id="GO:0039722">
    <property type="term" value="P:symbiont-mediated suppression of host toll-like receptor signaling pathway"/>
    <property type="evidence" value="ECO:0007669"/>
    <property type="project" value="UniProtKB-KW"/>
</dbReference>
<dbReference type="CDD" id="cd21030">
    <property type="entry name" value="V35-RBD_P-protein-C_like"/>
    <property type="match status" value="1"/>
</dbReference>
<dbReference type="FunFam" id="1.10.8.950:FF:000001">
    <property type="entry name" value="Polymerase cofactor VP35"/>
    <property type="match status" value="1"/>
</dbReference>
<dbReference type="FunFam" id="2.10.10.70:FF:000001">
    <property type="entry name" value="Polymerase cofactor VP35"/>
    <property type="match status" value="1"/>
</dbReference>
<dbReference type="Gene3D" id="2.10.10.70">
    <property type="entry name" value="Filoviridae VP35, C-terminal inhibitory domain, beta-sheet subdomain"/>
    <property type="match status" value="1"/>
</dbReference>
<dbReference type="Gene3D" id="1.10.8.950">
    <property type="entry name" value="Filoviridae VP35, C-terminal inhibitory domain, helical subdomain"/>
    <property type="match status" value="1"/>
</dbReference>
<dbReference type="InterPro" id="IPR002953">
    <property type="entry name" value="Filo_VP35"/>
</dbReference>
<dbReference type="InterPro" id="IPR031163">
    <property type="entry name" value="VP35_IID"/>
</dbReference>
<dbReference type="InterPro" id="IPR043061">
    <property type="entry name" value="VP35_IID_b-sht"/>
</dbReference>
<dbReference type="InterPro" id="IPR043060">
    <property type="entry name" value="VP35_IID_hlx"/>
</dbReference>
<dbReference type="Pfam" id="PF02097">
    <property type="entry name" value="Filo_VP35"/>
    <property type="match status" value="1"/>
</dbReference>
<dbReference type="PIRSF" id="PIRSF018326">
    <property type="entry name" value="VP35_FiloV"/>
    <property type="match status" value="1"/>
</dbReference>
<dbReference type="PRINTS" id="PR01240">
    <property type="entry name" value="FILOVP35"/>
</dbReference>
<dbReference type="PROSITE" id="PS51735">
    <property type="entry name" value="VP35_IID"/>
    <property type="match status" value="1"/>
</dbReference>
<accession>Q5XX07</accession>
<name>VP35_EBOSU</name>